<evidence type="ECO:0000255" key="1">
    <source>
        <dbReference type="HAMAP-Rule" id="MF_00251"/>
    </source>
</evidence>
<evidence type="ECO:0000305" key="2"/>
<accession>B8D828</accession>
<dbReference type="EMBL" id="CP001158">
    <property type="protein sequence ID" value="ACL30293.1"/>
    <property type="molecule type" value="Genomic_DNA"/>
</dbReference>
<dbReference type="RefSeq" id="WP_009874454.1">
    <property type="nucleotide sequence ID" value="NC_011834.1"/>
</dbReference>
<dbReference type="SMR" id="B8D828"/>
<dbReference type="KEGG" id="bau:BUAPTUC7_497"/>
<dbReference type="HOGENOM" id="CLU_135723_6_2_6"/>
<dbReference type="GO" id="GO:0005737">
    <property type="term" value="C:cytoplasm"/>
    <property type="evidence" value="ECO:0007669"/>
    <property type="project" value="UniProtKB-ARBA"/>
</dbReference>
<dbReference type="GO" id="GO:1990904">
    <property type="term" value="C:ribonucleoprotein complex"/>
    <property type="evidence" value="ECO:0007669"/>
    <property type="project" value="UniProtKB-KW"/>
</dbReference>
<dbReference type="GO" id="GO:0005840">
    <property type="term" value="C:ribosome"/>
    <property type="evidence" value="ECO:0007669"/>
    <property type="project" value="UniProtKB-KW"/>
</dbReference>
<dbReference type="GO" id="GO:0003735">
    <property type="term" value="F:structural constituent of ribosome"/>
    <property type="evidence" value="ECO:0007669"/>
    <property type="project" value="InterPro"/>
</dbReference>
<dbReference type="GO" id="GO:0006412">
    <property type="term" value="P:translation"/>
    <property type="evidence" value="ECO:0007669"/>
    <property type="project" value="UniProtKB-UniRule"/>
</dbReference>
<dbReference type="HAMAP" id="MF_00251">
    <property type="entry name" value="Ribosomal_bL36"/>
    <property type="match status" value="1"/>
</dbReference>
<dbReference type="InterPro" id="IPR000473">
    <property type="entry name" value="Ribosomal_bL36"/>
</dbReference>
<dbReference type="InterPro" id="IPR035977">
    <property type="entry name" value="Ribosomal_bL36_sp"/>
</dbReference>
<dbReference type="NCBIfam" id="TIGR01022">
    <property type="entry name" value="rpmJ_bact"/>
    <property type="match status" value="1"/>
</dbReference>
<dbReference type="PANTHER" id="PTHR42888">
    <property type="entry name" value="50S RIBOSOMAL PROTEIN L36, CHLOROPLASTIC"/>
    <property type="match status" value="1"/>
</dbReference>
<dbReference type="PANTHER" id="PTHR42888:SF1">
    <property type="entry name" value="LARGE RIBOSOMAL SUBUNIT PROTEIN BL36C"/>
    <property type="match status" value="1"/>
</dbReference>
<dbReference type="Pfam" id="PF00444">
    <property type="entry name" value="Ribosomal_L36"/>
    <property type="match status" value="1"/>
</dbReference>
<dbReference type="SUPFAM" id="SSF57840">
    <property type="entry name" value="Ribosomal protein L36"/>
    <property type="match status" value="1"/>
</dbReference>
<dbReference type="PROSITE" id="PS00828">
    <property type="entry name" value="RIBOSOMAL_L36"/>
    <property type="match status" value="1"/>
</dbReference>
<proteinExistence type="inferred from homology"/>
<organism>
    <name type="scientific">Buchnera aphidicola subsp. Acyrthosiphon pisum (strain Tuc7)</name>
    <dbReference type="NCBI Taxonomy" id="561501"/>
    <lineage>
        <taxon>Bacteria</taxon>
        <taxon>Pseudomonadati</taxon>
        <taxon>Pseudomonadota</taxon>
        <taxon>Gammaproteobacteria</taxon>
        <taxon>Enterobacterales</taxon>
        <taxon>Erwiniaceae</taxon>
        <taxon>Buchnera</taxon>
    </lineage>
</organism>
<protein>
    <recommendedName>
        <fullName evidence="1">Large ribosomal subunit protein bL36</fullName>
    </recommendedName>
    <alternativeName>
        <fullName evidence="2">50S ribosomal protein L36</fullName>
    </alternativeName>
</protein>
<reference key="1">
    <citation type="journal article" date="2009" name="Science">
        <title>The dynamics and time scale of ongoing genomic erosion in symbiotic bacteria.</title>
        <authorList>
            <person name="Moran N.A."/>
            <person name="McLaughlin H.J."/>
            <person name="Sorek R."/>
        </authorList>
    </citation>
    <scope>NUCLEOTIDE SEQUENCE [LARGE SCALE GENOMIC DNA]</scope>
    <source>
        <strain>Tuc7</strain>
    </source>
</reference>
<keyword id="KW-0687">Ribonucleoprotein</keyword>
<keyword id="KW-0689">Ribosomal protein</keyword>
<gene>
    <name evidence="1" type="primary">rpmJ</name>
    <name type="ordered locus">BUAPTUC7_497</name>
</gene>
<sequence length="38" mass="4365">MKVQASVKVLCRSCKIIKRNNVVRVICSNDPKHKQRQG</sequence>
<feature type="chain" id="PRO_1000196173" description="Large ribosomal subunit protein bL36">
    <location>
        <begin position="1"/>
        <end position="38"/>
    </location>
</feature>
<name>RL36_BUCAT</name>
<comment type="similarity">
    <text evidence="1">Belongs to the bacterial ribosomal protein bL36 family.</text>
</comment>